<sequence length="443" mass="48974">MSTTDSIVSSQAKQSSWRKSDTTWTLGLFGTAIGAGVLFFPIRAGFGGLIPILLMLVLAYPIAFYCHRALARLCLSGSNPSGNITETVEEHFGKTGGVVITFLYFFAICPLLWIYGVTITNTFMTFWENQLQMPALNRGFVALFLLLLMAFVIWFGKDLMVKVMSYLVWPFIASLVLISLSLIPYWNSAVIDQVDLSNIALTGHDGILVTVWLGISIMVFSFNFSPIVSSFVVSKREEYEKEFGREFTERKCSQIISRASMLMVAVVMFFAFSCLFTLSPQNMADAKAQNIPVLSYLANHFASLSGTKSTFATVLEYGASIIALVAIFKSFFGHYLGTLEGLNGLVLKFGYKGDKTKVSMGKLNTISMIFIMGSTWVVAYANPNILDLIEAMGAPIIASLLCLLPMYAIRKAPSLAKYRGRLDNVFVTLIGLLTILNIVYKLF</sequence>
<reference key="1">
    <citation type="journal article" date="2008" name="Genome Res.">
        <title>Comparative genome analysis of Salmonella enteritidis PT4 and Salmonella gallinarum 287/91 provides insights into evolutionary and host adaptation pathways.</title>
        <authorList>
            <person name="Thomson N.R."/>
            <person name="Clayton D.J."/>
            <person name="Windhorst D."/>
            <person name="Vernikos G."/>
            <person name="Davidson S."/>
            <person name="Churcher C."/>
            <person name="Quail M.A."/>
            <person name="Stevens M."/>
            <person name="Jones M.A."/>
            <person name="Watson M."/>
            <person name="Barron A."/>
            <person name="Layton A."/>
            <person name="Pickard D."/>
            <person name="Kingsley R.A."/>
            <person name="Bignell A."/>
            <person name="Clark L."/>
            <person name="Harris B."/>
            <person name="Ormond D."/>
            <person name="Abdellah Z."/>
            <person name="Brooks K."/>
            <person name="Cherevach I."/>
            <person name="Chillingworth T."/>
            <person name="Woodward J."/>
            <person name="Norberczak H."/>
            <person name="Lord A."/>
            <person name="Arrowsmith C."/>
            <person name="Jagels K."/>
            <person name="Moule S."/>
            <person name="Mungall K."/>
            <person name="Saunders M."/>
            <person name="Whitehead S."/>
            <person name="Chabalgoity J.A."/>
            <person name="Maskell D."/>
            <person name="Humphreys T."/>
            <person name="Roberts M."/>
            <person name="Barrow P.A."/>
            <person name="Dougan G."/>
            <person name="Parkhill J."/>
        </authorList>
    </citation>
    <scope>NUCLEOTIDE SEQUENCE [LARGE SCALE GENOMIC DNA]</scope>
    <source>
        <strain>P125109</strain>
    </source>
</reference>
<proteinExistence type="inferred from homology"/>
<comment type="function">
    <text evidence="1">Involved in the import of threonine and serine into the cell, with the concomitant import of a proton (symport system).</text>
</comment>
<comment type="catalytic activity">
    <reaction evidence="1">
        <text>L-threonine(in) + H(+)(in) = L-threonine(out) + H(+)(out)</text>
        <dbReference type="Rhea" id="RHEA:28883"/>
        <dbReference type="ChEBI" id="CHEBI:15378"/>
        <dbReference type="ChEBI" id="CHEBI:57926"/>
    </reaction>
    <physiologicalReaction direction="right-to-left" evidence="1">
        <dbReference type="Rhea" id="RHEA:28885"/>
    </physiologicalReaction>
</comment>
<comment type="catalytic activity">
    <reaction evidence="1">
        <text>L-serine(in) + H(+)(in) = L-serine(out) + H(+)(out)</text>
        <dbReference type="Rhea" id="RHEA:28887"/>
        <dbReference type="ChEBI" id="CHEBI:15378"/>
        <dbReference type="ChEBI" id="CHEBI:33384"/>
    </reaction>
    <physiologicalReaction direction="right-to-left" evidence="1">
        <dbReference type="Rhea" id="RHEA:28889"/>
    </physiologicalReaction>
</comment>
<comment type="subcellular location">
    <subcellularLocation>
        <location evidence="1">Cell inner membrane</location>
        <topology evidence="1">Multi-pass membrane protein</topology>
    </subcellularLocation>
</comment>
<comment type="similarity">
    <text evidence="1">Belongs to the amino acid/polyamine transporter 2 family. SdaC/TdcC subfamily.</text>
</comment>
<name>TDCC_SALEP</name>
<feature type="chain" id="PRO_1000147637" description="Threonine/serine transporter TdcC">
    <location>
        <begin position="1"/>
        <end position="443"/>
    </location>
</feature>
<feature type="transmembrane region" description="Helical" evidence="1">
    <location>
        <begin position="22"/>
        <end position="42"/>
    </location>
</feature>
<feature type="transmembrane region" description="Helical" evidence="1">
    <location>
        <begin position="44"/>
        <end position="64"/>
    </location>
</feature>
<feature type="transmembrane region" description="Helical" evidence="1">
    <location>
        <begin position="97"/>
        <end position="117"/>
    </location>
</feature>
<feature type="transmembrane region" description="Helical" evidence="1">
    <location>
        <begin position="140"/>
        <end position="160"/>
    </location>
</feature>
<feature type="transmembrane region" description="Helical" evidence="1">
    <location>
        <begin position="163"/>
        <end position="183"/>
    </location>
</feature>
<feature type="transmembrane region" description="Helical" evidence="1">
    <location>
        <begin position="207"/>
        <end position="227"/>
    </location>
</feature>
<feature type="transmembrane region" description="Helical" evidence="1">
    <location>
        <begin position="259"/>
        <end position="279"/>
    </location>
</feature>
<feature type="transmembrane region" description="Helical" evidence="1">
    <location>
        <begin position="319"/>
        <end position="339"/>
    </location>
</feature>
<feature type="transmembrane region" description="Helical" evidence="1">
    <location>
        <begin position="366"/>
        <end position="386"/>
    </location>
</feature>
<feature type="transmembrane region" description="Helical" evidence="1">
    <location>
        <begin position="389"/>
        <end position="409"/>
    </location>
</feature>
<feature type="transmembrane region" description="Helical" evidence="1">
    <location>
        <begin position="423"/>
        <end position="443"/>
    </location>
</feature>
<protein>
    <recommendedName>
        <fullName evidence="1">Threonine/serine transporter TdcC</fullName>
    </recommendedName>
    <alternativeName>
        <fullName evidence="1">H(+)/threonine-serine symporter</fullName>
    </alternativeName>
</protein>
<gene>
    <name evidence="1" type="primary">tdcC</name>
    <name type="ordered locus">SEN3084</name>
</gene>
<evidence type="ECO:0000255" key="1">
    <source>
        <dbReference type="HAMAP-Rule" id="MF_01583"/>
    </source>
</evidence>
<dbReference type="EMBL" id="AM933172">
    <property type="protein sequence ID" value="CAR34660.1"/>
    <property type="molecule type" value="Genomic_DNA"/>
</dbReference>
<dbReference type="RefSeq" id="WP_000108129.1">
    <property type="nucleotide sequence ID" value="NC_011294.1"/>
</dbReference>
<dbReference type="KEGG" id="set:SEN3084"/>
<dbReference type="HOGENOM" id="CLU_052043_1_1_6"/>
<dbReference type="Proteomes" id="UP000000613">
    <property type="component" value="Chromosome"/>
</dbReference>
<dbReference type="GO" id="GO:0005886">
    <property type="term" value="C:plasma membrane"/>
    <property type="evidence" value="ECO:0007669"/>
    <property type="project" value="UniProtKB-SubCell"/>
</dbReference>
<dbReference type="GO" id="GO:0015194">
    <property type="term" value="F:L-serine transmembrane transporter activity"/>
    <property type="evidence" value="ECO:0007669"/>
    <property type="project" value="InterPro"/>
</dbReference>
<dbReference type="GO" id="GO:0015293">
    <property type="term" value="F:symporter activity"/>
    <property type="evidence" value="ECO:0007669"/>
    <property type="project" value="UniProtKB-UniRule"/>
</dbReference>
<dbReference type="GO" id="GO:0015565">
    <property type="term" value="F:threonine efflux transmembrane transporter activity"/>
    <property type="evidence" value="ECO:0007669"/>
    <property type="project" value="InterPro"/>
</dbReference>
<dbReference type="Gene3D" id="1.20.1740.10">
    <property type="entry name" value="Amino acid/polyamine transporter I"/>
    <property type="match status" value="1"/>
</dbReference>
<dbReference type="HAMAP" id="MF_01583">
    <property type="entry name" value="Thr_Ser_transp_TdcC"/>
    <property type="match status" value="1"/>
</dbReference>
<dbReference type="InterPro" id="IPR018227">
    <property type="entry name" value="Amino_acid_transport_2"/>
</dbReference>
<dbReference type="InterPro" id="IPR004694">
    <property type="entry name" value="Hydroxy_aa_transpt"/>
</dbReference>
<dbReference type="InterPro" id="IPR023726">
    <property type="entry name" value="Thr/Ser_transpt_TdcC"/>
</dbReference>
<dbReference type="NCBIfam" id="NF010152">
    <property type="entry name" value="PRK13629.1"/>
    <property type="match status" value="1"/>
</dbReference>
<dbReference type="NCBIfam" id="TIGR00814">
    <property type="entry name" value="stp"/>
    <property type="match status" value="1"/>
</dbReference>
<dbReference type="PANTHER" id="PTHR35334">
    <property type="entry name" value="SERINE TRANSPORTER"/>
    <property type="match status" value="1"/>
</dbReference>
<dbReference type="PANTHER" id="PTHR35334:SF1">
    <property type="entry name" value="THREONINE_SERINE TRANSPORTER TDCC"/>
    <property type="match status" value="1"/>
</dbReference>
<dbReference type="Pfam" id="PF03222">
    <property type="entry name" value="Trp_Tyr_perm"/>
    <property type="match status" value="1"/>
</dbReference>
<accession>B5QZS1</accession>
<organism>
    <name type="scientific">Salmonella enteritidis PT4 (strain P125109)</name>
    <dbReference type="NCBI Taxonomy" id="550537"/>
    <lineage>
        <taxon>Bacteria</taxon>
        <taxon>Pseudomonadati</taxon>
        <taxon>Pseudomonadota</taxon>
        <taxon>Gammaproteobacteria</taxon>
        <taxon>Enterobacterales</taxon>
        <taxon>Enterobacteriaceae</taxon>
        <taxon>Salmonella</taxon>
    </lineage>
</organism>
<keyword id="KW-0029">Amino-acid transport</keyword>
<keyword id="KW-0997">Cell inner membrane</keyword>
<keyword id="KW-1003">Cell membrane</keyword>
<keyword id="KW-0472">Membrane</keyword>
<keyword id="KW-0769">Symport</keyword>
<keyword id="KW-0812">Transmembrane</keyword>
<keyword id="KW-1133">Transmembrane helix</keyword>
<keyword id="KW-0813">Transport</keyword>